<accession>Q862Z5</accession>
<organism>
    <name type="scientific">Macaca fuscata fuscata</name>
    <name type="common">Japanese macaque</name>
    <dbReference type="NCBI Taxonomy" id="9543"/>
    <lineage>
        <taxon>Eukaryota</taxon>
        <taxon>Metazoa</taxon>
        <taxon>Chordata</taxon>
        <taxon>Craniata</taxon>
        <taxon>Vertebrata</taxon>
        <taxon>Euteleostomi</taxon>
        <taxon>Mammalia</taxon>
        <taxon>Eutheria</taxon>
        <taxon>Euarchontoglires</taxon>
        <taxon>Primates</taxon>
        <taxon>Haplorrhini</taxon>
        <taxon>Catarrhini</taxon>
        <taxon>Cercopithecidae</taxon>
        <taxon>Cercopithecinae</taxon>
        <taxon>Macaca</taxon>
    </lineage>
</organism>
<evidence type="ECO:0000250" key="1"/>
<evidence type="ECO:0000250" key="2">
    <source>
        <dbReference type="UniProtKB" id="P25417"/>
    </source>
</evidence>
<evidence type="ECO:0000305" key="3"/>
<keyword id="KW-0007">Acetylation</keyword>
<keyword id="KW-0963">Cytoplasm</keyword>
<keyword id="KW-0539">Nucleus</keyword>
<keyword id="KW-0646">Protease inhibitor</keyword>
<keyword id="KW-0789">Thiol protease inhibitor</keyword>
<gene>
    <name type="primary">CSTB</name>
    <name type="synonym">STFB</name>
</gene>
<dbReference type="EMBL" id="AB083417">
    <property type="protein sequence ID" value="BAC21008.1"/>
    <property type="molecule type" value="Genomic_DNA"/>
</dbReference>
<dbReference type="SMR" id="Q862Z5"/>
<dbReference type="MEROPS" id="I25.003"/>
<dbReference type="GO" id="GO:0005829">
    <property type="term" value="C:cytosol"/>
    <property type="evidence" value="ECO:0007669"/>
    <property type="project" value="TreeGrafter"/>
</dbReference>
<dbReference type="GO" id="GO:0005634">
    <property type="term" value="C:nucleus"/>
    <property type="evidence" value="ECO:0007669"/>
    <property type="project" value="UniProtKB-SubCell"/>
</dbReference>
<dbReference type="GO" id="GO:0004869">
    <property type="term" value="F:cysteine-type endopeptidase inhibitor activity"/>
    <property type="evidence" value="ECO:0007669"/>
    <property type="project" value="UniProtKB-KW"/>
</dbReference>
<dbReference type="CDD" id="cd00042">
    <property type="entry name" value="CY"/>
    <property type="match status" value="1"/>
</dbReference>
<dbReference type="FunFam" id="3.10.450.10:FF:000001">
    <property type="entry name" value="Cystatin-A"/>
    <property type="match status" value="1"/>
</dbReference>
<dbReference type="Gene3D" id="3.10.450.10">
    <property type="match status" value="1"/>
</dbReference>
<dbReference type="InterPro" id="IPR000010">
    <property type="entry name" value="Cystatin_dom"/>
</dbReference>
<dbReference type="InterPro" id="IPR046350">
    <property type="entry name" value="Cystatin_sf"/>
</dbReference>
<dbReference type="InterPro" id="IPR018073">
    <property type="entry name" value="Prot_inh_cystat_CS"/>
</dbReference>
<dbReference type="InterPro" id="IPR001713">
    <property type="entry name" value="Prot_inh_stefin"/>
</dbReference>
<dbReference type="PANTHER" id="PTHR11414">
    <property type="entry name" value="CYSTATIN FAMILY MEMBER"/>
    <property type="match status" value="1"/>
</dbReference>
<dbReference type="PANTHER" id="PTHR11414:SF22">
    <property type="entry name" value="CYSTATIN-B"/>
    <property type="match status" value="1"/>
</dbReference>
<dbReference type="Pfam" id="PF00031">
    <property type="entry name" value="Cystatin"/>
    <property type="match status" value="1"/>
</dbReference>
<dbReference type="PRINTS" id="PR00295">
    <property type="entry name" value="STEFINA"/>
</dbReference>
<dbReference type="SMART" id="SM00043">
    <property type="entry name" value="CY"/>
    <property type="match status" value="1"/>
</dbReference>
<dbReference type="SUPFAM" id="SSF54403">
    <property type="entry name" value="Cystatin/monellin"/>
    <property type="match status" value="1"/>
</dbReference>
<dbReference type="PROSITE" id="PS00287">
    <property type="entry name" value="CYSTATIN"/>
    <property type="match status" value="1"/>
</dbReference>
<proteinExistence type="inferred from homology"/>
<reference key="1">
    <citation type="journal article" date="2003" name="Genomics">
        <title>Evolution of the cystatin B gene: implications for the origin of its variable dodecamer tandem repeat in humans.</title>
        <authorList>
            <person name="Osawa M."/>
            <person name="Kaneko M."/>
            <person name="Horiuchi H."/>
            <person name="Kitano T."/>
            <person name="Kawamoto Y."/>
            <person name="Saitou N."/>
            <person name="Umetsu K."/>
        </authorList>
    </citation>
    <scope>NUCLEOTIDE SEQUENCE [GENOMIC DNA]</scope>
</reference>
<comment type="function">
    <text evidence="1">This is an intracellular thiol proteinase inhibitor. Tightly binding reversible inhibitor of cathepsins L, H and B (By similarity).</text>
</comment>
<comment type="subunit">
    <text evidence="1">Able to form dimers stabilized by noncovalent forces.</text>
</comment>
<comment type="subcellular location">
    <subcellularLocation>
        <location evidence="1">Cytoplasm</location>
    </subcellularLocation>
    <subcellularLocation>
        <location evidence="1">Nucleus</location>
    </subcellularLocation>
</comment>
<comment type="similarity">
    <text evidence="3">Belongs to the cystatin family.</text>
</comment>
<feature type="chain" id="PRO_0000207137" description="Cystatin-B">
    <location>
        <begin position="1"/>
        <end position="98"/>
    </location>
</feature>
<feature type="short sequence motif" description="Secondary area of contact" evidence="1">
    <location>
        <begin position="46"/>
        <end position="50"/>
    </location>
</feature>
<feature type="site" description="Reactive site" evidence="1">
    <location>
        <position position="4"/>
    </location>
</feature>
<feature type="modified residue" description="N-acetylmethionine" evidence="2 3">
    <location>
        <position position="1"/>
    </location>
</feature>
<name>CYTB_MACFU</name>
<sequence>MMCGAPSAVQPATAETQDIADQVRSQLEEKENKKFPVFKAVSFKSQVVAGTNYFIKVHVGDEDFVHLRVFKSLPHENKPLTLSDYQTNKAKHDELSYF</sequence>
<protein>
    <recommendedName>
        <fullName>Cystatin-B</fullName>
    </recommendedName>
    <alternativeName>
        <fullName>Stefin-B</fullName>
    </alternativeName>
</protein>